<gene>
    <name evidence="1" type="primary">ruvB</name>
    <name type="ordered locus">Tfu_2093</name>
</gene>
<feature type="chain" id="PRO_0000235424" description="Holliday junction branch migration complex subunit RuvB">
    <location>
        <begin position="1"/>
        <end position="351"/>
    </location>
</feature>
<feature type="region of interest" description="Large ATPase domain (RuvB-L)" evidence="1">
    <location>
        <begin position="4"/>
        <end position="185"/>
    </location>
</feature>
<feature type="region of interest" description="Small ATPAse domain (RuvB-S)" evidence="1">
    <location>
        <begin position="186"/>
        <end position="256"/>
    </location>
</feature>
<feature type="region of interest" description="Head domain (RuvB-H)" evidence="1">
    <location>
        <begin position="259"/>
        <end position="351"/>
    </location>
</feature>
<feature type="binding site" evidence="1">
    <location>
        <position position="24"/>
    </location>
    <ligand>
        <name>ATP</name>
        <dbReference type="ChEBI" id="CHEBI:30616"/>
    </ligand>
</feature>
<feature type="binding site" evidence="1">
    <location>
        <position position="25"/>
    </location>
    <ligand>
        <name>ATP</name>
        <dbReference type="ChEBI" id="CHEBI:30616"/>
    </ligand>
</feature>
<feature type="binding site" evidence="1">
    <location>
        <position position="66"/>
    </location>
    <ligand>
        <name>ATP</name>
        <dbReference type="ChEBI" id="CHEBI:30616"/>
    </ligand>
</feature>
<feature type="binding site" evidence="1">
    <location>
        <position position="69"/>
    </location>
    <ligand>
        <name>ATP</name>
        <dbReference type="ChEBI" id="CHEBI:30616"/>
    </ligand>
</feature>
<feature type="binding site" evidence="1">
    <location>
        <position position="70"/>
    </location>
    <ligand>
        <name>ATP</name>
        <dbReference type="ChEBI" id="CHEBI:30616"/>
    </ligand>
</feature>
<feature type="binding site" evidence="1">
    <location>
        <position position="70"/>
    </location>
    <ligand>
        <name>Mg(2+)</name>
        <dbReference type="ChEBI" id="CHEBI:18420"/>
    </ligand>
</feature>
<feature type="binding site" evidence="1">
    <location>
        <position position="71"/>
    </location>
    <ligand>
        <name>ATP</name>
        <dbReference type="ChEBI" id="CHEBI:30616"/>
    </ligand>
</feature>
<feature type="binding site" evidence="1">
    <location>
        <begin position="132"/>
        <end position="134"/>
    </location>
    <ligand>
        <name>ATP</name>
        <dbReference type="ChEBI" id="CHEBI:30616"/>
    </ligand>
</feature>
<feature type="binding site" evidence="1">
    <location>
        <position position="175"/>
    </location>
    <ligand>
        <name>ATP</name>
        <dbReference type="ChEBI" id="CHEBI:30616"/>
    </ligand>
</feature>
<feature type="binding site" evidence="1">
    <location>
        <position position="185"/>
    </location>
    <ligand>
        <name>ATP</name>
        <dbReference type="ChEBI" id="CHEBI:30616"/>
    </ligand>
</feature>
<feature type="binding site" evidence="1">
    <location>
        <position position="222"/>
    </location>
    <ligand>
        <name>ATP</name>
        <dbReference type="ChEBI" id="CHEBI:30616"/>
    </ligand>
</feature>
<feature type="binding site" evidence="1">
    <location>
        <position position="314"/>
    </location>
    <ligand>
        <name>DNA</name>
        <dbReference type="ChEBI" id="CHEBI:16991"/>
    </ligand>
</feature>
<feature type="binding site" evidence="1">
    <location>
        <position position="319"/>
    </location>
    <ligand>
        <name>DNA</name>
        <dbReference type="ChEBI" id="CHEBI:16991"/>
    </ligand>
</feature>
<keyword id="KW-0067">ATP-binding</keyword>
<keyword id="KW-0963">Cytoplasm</keyword>
<keyword id="KW-0227">DNA damage</keyword>
<keyword id="KW-0233">DNA recombination</keyword>
<keyword id="KW-0234">DNA repair</keyword>
<keyword id="KW-0238">DNA-binding</keyword>
<keyword id="KW-0378">Hydrolase</keyword>
<keyword id="KW-0547">Nucleotide-binding</keyword>
<accession>Q47N43</accession>
<dbReference type="EC" id="3.6.4.-" evidence="1"/>
<dbReference type="EMBL" id="CP000088">
    <property type="protein sequence ID" value="AAZ56126.1"/>
    <property type="molecule type" value="Genomic_DNA"/>
</dbReference>
<dbReference type="RefSeq" id="WP_011292516.1">
    <property type="nucleotide sequence ID" value="NC_007333.1"/>
</dbReference>
<dbReference type="SMR" id="Q47N43"/>
<dbReference type="STRING" id="269800.Tfu_2093"/>
<dbReference type="KEGG" id="tfu:Tfu_2093"/>
<dbReference type="eggNOG" id="COG2255">
    <property type="taxonomic scope" value="Bacteria"/>
</dbReference>
<dbReference type="HOGENOM" id="CLU_055599_1_0_11"/>
<dbReference type="OrthoDB" id="9804478at2"/>
<dbReference type="GO" id="GO:0005737">
    <property type="term" value="C:cytoplasm"/>
    <property type="evidence" value="ECO:0007669"/>
    <property type="project" value="UniProtKB-SubCell"/>
</dbReference>
<dbReference type="GO" id="GO:0048476">
    <property type="term" value="C:Holliday junction resolvase complex"/>
    <property type="evidence" value="ECO:0007669"/>
    <property type="project" value="UniProtKB-UniRule"/>
</dbReference>
<dbReference type="GO" id="GO:0005524">
    <property type="term" value="F:ATP binding"/>
    <property type="evidence" value="ECO:0007669"/>
    <property type="project" value="UniProtKB-UniRule"/>
</dbReference>
<dbReference type="GO" id="GO:0016887">
    <property type="term" value="F:ATP hydrolysis activity"/>
    <property type="evidence" value="ECO:0007669"/>
    <property type="project" value="InterPro"/>
</dbReference>
<dbReference type="GO" id="GO:0000400">
    <property type="term" value="F:four-way junction DNA binding"/>
    <property type="evidence" value="ECO:0007669"/>
    <property type="project" value="UniProtKB-UniRule"/>
</dbReference>
<dbReference type="GO" id="GO:0009378">
    <property type="term" value="F:four-way junction helicase activity"/>
    <property type="evidence" value="ECO:0007669"/>
    <property type="project" value="InterPro"/>
</dbReference>
<dbReference type="GO" id="GO:0006310">
    <property type="term" value="P:DNA recombination"/>
    <property type="evidence" value="ECO:0007669"/>
    <property type="project" value="UniProtKB-UniRule"/>
</dbReference>
<dbReference type="GO" id="GO:0006281">
    <property type="term" value="P:DNA repair"/>
    <property type="evidence" value="ECO:0007669"/>
    <property type="project" value="UniProtKB-UniRule"/>
</dbReference>
<dbReference type="CDD" id="cd00009">
    <property type="entry name" value="AAA"/>
    <property type="match status" value="1"/>
</dbReference>
<dbReference type="Gene3D" id="1.10.8.60">
    <property type="match status" value="1"/>
</dbReference>
<dbReference type="Gene3D" id="3.40.50.300">
    <property type="entry name" value="P-loop containing nucleotide triphosphate hydrolases"/>
    <property type="match status" value="1"/>
</dbReference>
<dbReference type="Gene3D" id="1.10.10.10">
    <property type="entry name" value="Winged helix-like DNA-binding domain superfamily/Winged helix DNA-binding domain"/>
    <property type="match status" value="1"/>
</dbReference>
<dbReference type="HAMAP" id="MF_00016">
    <property type="entry name" value="DNA_HJ_migration_RuvB"/>
    <property type="match status" value="1"/>
</dbReference>
<dbReference type="InterPro" id="IPR003593">
    <property type="entry name" value="AAA+_ATPase"/>
</dbReference>
<dbReference type="InterPro" id="IPR041445">
    <property type="entry name" value="AAA_lid_4"/>
</dbReference>
<dbReference type="InterPro" id="IPR004605">
    <property type="entry name" value="DNA_helicase_Holl-junc_RuvB"/>
</dbReference>
<dbReference type="InterPro" id="IPR027417">
    <property type="entry name" value="P-loop_NTPase"/>
</dbReference>
<dbReference type="InterPro" id="IPR008824">
    <property type="entry name" value="RuvB-like_N"/>
</dbReference>
<dbReference type="InterPro" id="IPR008823">
    <property type="entry name" value="RuvB_C"/>
</dbReference>
<dbReference type="InterPro" id="IPR036388">
    <property type="entry name" value="WH-like_DNA-bd_sf"/>
</dbReference>
<dbReference type="InterPro" id="IPR036390">
    <property type="entry name" value="WH_DNA-bd_sf"/>
</dbReference>
<dbReference type="NCBIfam" id="NF000868">
    <property type="entry name" value="PRK00080.1"/>
    <property type="match status" value="1"/>
</dbReference>
<dbReference type="NCBIfam" id="TIGR00635">
    <property type="entry name" value="ruvB"/>
    <property type="match status" value="1"/>
</dbReference>
<dbReference type="PANTHER" id="PTHR42848">
    <property type="match status" value="1"/>
</dbReference>
<dbReference type="PANTHER" id="PTHR42848:SF1">
    <property type="entry name" value="HOLLIDAY JUNCTION BRANCH MIGRATION COMPLEX SUBUNIT RUVB"/>
    <property type="match status" value="1"/>
</dbReference>
<dbReference type="Pfam" id="PF17864">
    <property type="entry name" value="AAA_lid_4"/>
    <property type="match status" value="1"/>
</dbReference>
<dbReference type="Pfam" id="PF05491">
    <property type="entry name" value="RuvB_C"/>
    <property type="match status" value="1"/>
</dbReference>
<dbReference type="Pfam" id="PF05496">
    <property type="entry name" value="RuvB_N"/>
    <property type="match status" value="1"/>
</dbReference>
<dbReference type="SMART" id="SM00382">
    <property type="entry name" value="AAA"/>
    <property type="match status" value="1"/>
</dbReference>
<dbReference type="SUPFAM" id="SSF52540">
    <property type="entry name" value="P-loop containing nucleoside triphosphate hydrolases"/>
    <property type="match status" value="1"/>
</dbReference>
<dbReference type="SUPFAM" id="SSF46785">
    <property type="entry name" value="Winged helix' DNA-binding domain"/>
    <property type="match status" value="1"/>
</dbReference>
<organism>
    <name type="scientific">Thermobifida fusca (strain YX)</name>
    <dbReference type="NCBI Taxonomy" id="269800"/>
    <lineage>
        <taxon>Bacteria</taxon>
        <taxon>Bacillati</taxon>
        <taxon>Actinomycetota</taxon>
        <taxon>Actinomycetes</taxon>
        <taxon>Streptosporangiales</taxon>
        <taxon>Nocardiopsidaceae</taxon>
        <taxon>Thermobifida</taxon>
    </lineage>
</organism>
<proteinExistence type="inferred from homology"/>
<comment type="function">
    <text evidence="1">The RuvA-RuvB-RuvC complex processes Holliday junction (HJ) DNA during genetic recombination and DNA repair, while the RuvA-RuvB complex plays an important role in the rescue of blocked DNA replication forks via replication fork reversal (RFR). RuvA specifically binds to HJ cruciform DNA, conferring on it an open structure. The RuvB hexamer acts as an ATP-dependent pump, pulling dsDNA into and through the RuvAB complex. RuvB forms 2 homohexamers on either side of HJ DNA bound by 1 or 2 RuvA tetramers; 4 subunits per hexamer contact DNA at a time. Coordinated motions by a converter formed by DNA-disengaged RuvB subunits stimulates ATP hydrolysis and nucleotide exchange. Immobilization of the converter enables RuvB to convert the ATP-contained energy into a lever motion, pulling 2 nucleotides of DNA out of the RuvA tetramer per ATP hydrolyzed, thus driving DNA branch migration. The RuvB motors rotate together with the DNA substrate, which together with the progressing nucleotide cycle form the mechanistic basis for DNA recombination by continuous HJ branch migration. Branch migration allows RuvC to scan DNA until it finds its consensus sequence, where it cleaves and resolves cruciform DNA.</text>
</comment>
<comment type="catalytic activity">
    <reaction evidence="1">
        <text>ATP + H2O = ADP + phosphate + H(+)</text>
        <dbReference type="Rhea" id="RHEA:13065"/>
        <dbReference type="ChEBI" id="CHEBI:15377"/>
        <dbReference type="ChEBI" id="CHEBI:15378"/>
        <dbReference type="ChEBI" id="CHEBI:30616"/>
        <dbReference type="ChEBI" id="CHEBI:43474"/>
        <dbReference type="ChEBI" id="CHEBI:456216"/>
    </reaction>
</comment>
<comment type="subunit">
    <text evidence="1">Homohexamer. Forms an RuvA(8)-RuvB(12)-Holliday junction (HJ) complex. HJ DNA is sandwiched between 2 RuvA tetramers; dsDNA enters through RuvA and exits via RuvB. An RuvB hexamer assembles on each DNA strand where it exits the tetramer. Each RuvB hexamer is contacted by two RuvA subunits (via domain III) on 2 adjacent RuvB subunits; this complex drives branch migration. In the full resolvosome a probable DNA-RuvA(4)-RuvB(12)-RuvC(2) complex forms which resolves the HJ.</text>
</comment>
<comment type="subcellular location">
    <subcellularLocation>
        <location evidence="1">Cytoplasm</location>
    </subcellularLocation>
</comment>
<comment type="domain">
    <text evidence="1">Has 3 domains, the large (RuvB-L) and small ATPase (RuvB-S) domains and the C-terminal head (RuvB-H) domain. The head domain binds DNA, while the ATPase domains jointly bind ATP, ADP or are empty depending on the state of the subunit in the translocation cycle. During a single DNA translocation step the structure of each domain remains the same, but their relative positions change.</text>
</comment>
<comment type="similarity">
    <text evidence="1">Belongs to the RuvB family.</text>
</comment>
<reference key="1">
    <citation type="journal article" date="2007" name="J. Bacteriol.">
        <title>Genome sequence and analysis of the soil cellulolytic actinomycete Thermobifida fusca YX.</title>
        <authorList>
            <person name="Lykidis A."/>
            <person name="Mavromatis K."/>
            <person name="Ivanova N."/>
            <person name="Anderson I."/>
            <person name="Land M."/>
            <person name="DiBartolo G."/>
            <person name="Martinez M."/>
            <person name="Lapidus A."/>
            <person name="Lucas S."/>
            <person name="Copeland A."/>
            <person name="Richardson P."/>
            <person name="Wilson D.B."/>
            <person name="Kyrpides N."/>
        </authorList>
    </citation>
    <scope>NUCLEOTIDE SEQUENCE [LARGE SCALE GENOMIC DNA]</scope>
    <source>
        <strain>YX</strain>
    </source>
</reference>
<sequence length="351" mass="38115">MSEHDRELVSPEAALDDHAVESALRPRTLDEFVGQDRVREQLSLVLRSAQQRGTAPDHILMSGGPGLGKTTLAMIIAAELGAPLRITSGPAIERSGDLAAVLSTLREGEVLFLDEIHRMARPAEEMLYVAMEDFRVDVMVGKGPGATAIPLEIAPFTLVGATTRAGMLPAPLRDRFGFVAHMDFYSPEELELILHRSARLLGIELLDDAAAEIARRSRGTPRIANRLLRRVRDYAQVRGDGRLTLECARAALSLYEVDDEGLDRLDRAVLDALLRRFRGGPVGLSTLAVSVGEEPETVEIVAEPFLVRAGFIARTPRGRVATPQAWAHMGLTPPPDAAFGAAALFDPDEEP</sequence>
<evidence type="ECO:0000255" key="1">
    <source>
        <dbReference type="HAMAP-Rule" id="MF_00016"/>
    </source>
</evidence>
<name>RUVB_THEFY</name>
<protein>
    <recommendedName>
        <fullName evidence="1">Holliday junction branch migration complex subunit RuvB</fullName>
        <ecNumber evidence="1">3.6.4.-</ecNumber>
    </recommendedName>
</protein>